<feature type="chain" id="PRO_1000100351" description="Ribonuclease P protein component">
    <location>
        <begin position="1"/>
        <end position="125"/>
    </location>
</feature>
<sequence>MIYRLKKNIEFIIVYRRGKSFANKTLVLYVLKNKRNKDKDGIAYSKVGISVSKKVGNSVVRSKCKRLLSESFRLNYNNILKGYDCVFVARNPIRDSNYFETEKAMKNLIKKAGLYYDEENGIKSN</sequence>
<keyword id="KW-0255">Endonuclease</keyword>
<keyword id="KW-0378">Hydrolase</keyword>
<keyword id="KW-0540">Nuclease</keyword>
<keyword id="KW-0694">RNA-binding</keyword>
<keyword id="KW-0819">tRNA processing</keyword>
<evidence type="ECO:0000255" key="1">
    <source>
        <dbReference type="HAMAP-Rule" id="MF_00227"/>
    </source>
</evidence>
<organism>
    <name type="scientific">Clostridium botulinum (strain Eklund 17B / Type B)</name>
    <dbReference type="NCBI Taxonomy" id="935198"/>
    <lineage>
        <taxon>Bacteria</taxon>
        <taxon>Bacillati</taxon>
        <taxon>Bacillota</taxon>
        <taxon>Clostridia</taxon>
        <taxon>Eubacteriales</taxon>
        <taxon>Clostridiaceae</taxon>
        <taxon>Clostridium</taxon>
    </lineage>
</organism>
<accession>B2TRI3</accession>
<dbReference type="EC" id="3.1.26.5" evidence="1"/>
<dbReference type="EMBL" id="CP001056">
    <property type="protein sequence ID" value="ACD24079.1"/>
    <property type="molecule type" value="Genomic_DNA"/>
</dbReference>
<dbReference type="SMR" id="B2TRI3"/>
<dbReference type="KEGG" id="cbk:CLL_A3603"/>
<dbReference type="PATRIC" id="fig|935198.13.peg.3526"/>
<dbReference type="HOGENOM" id="CLU_117179_9_1_9"/>
<dbReference type="Proteomes" id="UP000001195">
    <property type="component" value="Chromosome"/>
</dbReference>
<dbReference type="GO" id="GO:0030677">
    <property type="term" value="C:ribonuclease P complex"/>
    <property type="evidence" value="ECO:0007669"/>
    <property type="project" value="TreeGrafter"/>
</dbReference>
<dbReference type="GO" id="GO:0042781">
    <property type="term" value="F:3'-tRNA processing endoribonuclease activity"/>
    <property type="evidence" value="ECO:0007669"/>
    <property type="project" value="TreeGrafter"/>
</dbReference>
<dbReference type="GO" id="GO:0004526">
    <property type="term" value="F:ribonuclease P activity"/>
    <property type="evidence" value="ECO:0007669"/>
    <property type="project" value="UniProtKB-UniRule"/>
</dbReference>
<dbReference type="GO" id="GO:0000049">
    <property type="term" value="F:tRNA binding"/>
    <property type="evidence" value="ECO:0007669"/>
    <property type="project" value="UniProtKB-UniRule"/>
</dbReference>
<dbReference type="GO" id="GO:0001682">
    <property type="term" value="P:tRNA 5'-leader removal"/>
    <property type="evidence" value="ECO:0007669"/>
    <property type="project" value="UniProtKB-UniRule"/>
</dbReference>
<dbReference type="Gene3D" id="3.30.230.10">
    <property type="match status" value="1"/>
</dbReference>
<dbReference type="HAMAP" id="MF_00227">
    <property type="entry name" value="RNase_P"/>
    <property type="match status" value="1"/>
</dbReference>
<dbReference type="InterPro" id="IPR020568">
    <property type="entry name" value="Ribosomal_Su5_D2-typ_SF"/>
</dbReference>
<dbReference type="InterPro" id="IPR014721">
    <property type="entry name" value="Ribsml_uS5_D2-typ_fold_subgr"/>
</dbReference>
<dbReference type="InterPro" id="IPR000100">
    <property type="entry name" value="RNase_P"/>
</dbReference>
<dbReference type="NCBIfam" id="TIGR00188">
    <property type="entry name" value="rnpA"/>
    <property type="match status" value="1"/>
</dbReference>
<dbReference type="PANTHER" id="PTHR33992">
    <property type="entry name" value="RIBONUCLEASE P PROTEIN COMPONENT"/>
    <property type="match status" value="1"/>
</dbReference>
<dbReference type="PANTHER" id="PTHR33992:SF1">
    <property type="entry name" value="RIBONUCLEASE P PROTEIN COMPONENT"/>
    <property type="match status" value="1"/>
</dbReference>
<dbReference type="Pfam" id="PF00825">
    <property type="entry name" value="Ribonuclease_P"/>
    <property type="match status" value="1"/>
</dbReference>
<dbReference type="SUPFAM" id="SSF54211">
    <property type="entry name" value="Ribosomal protein S5 domain 2-like"/>
    <property type="match status" value="1"/>
</dbReference>
<name>RNPA_CLOBB</name>
<gene>
    <name evidence="1" type="primary">rnpA</name>
    <name type="ordered locus">CLL_A3603</name>
</gene>
<proteinExistence type="inferred from homology"/>
<comment type="function">
    <text evidence="1">RNaseP catalyzes the removal of the 5'-leader sequence from pre-tRNA to produce the mature 5'-terminus. It can also cleave other RNA substrates such as 4.5S RNA. The protein component plays an auxiliary but essential role in vivo by binding to the 5'-leader sequence and broadening the substrate specificity of the ribozyme.</text>
</comment>
<comment type="catalytic activity">
    <reaction evidence="1">
        <text>Endonucleolytic cleavage of RNA, removing 5'-extranucleotides from tRNA precursor.</text>
        <dbReference type="EC" id="3.1.26.5"/>
    </reaction>
</comment>
<comment type="subunit">
    <text evidence="1">Consists of a catalytic RNA component (M1 or rnpB) and a protein subunit.</text>
</comment>
<comment type="similarity">
    <text evidence="1">Belongs to the RnpA family.</text>
</comment>
<reference key="1">
    <citation type="submission" date="2008-04" db="EMBL/GenBank/DDBJ databases">
        <title>Complete sequence of Clostridium botulinum strain Eklund.</title>
        <authorList>
            <person name="Brinkac L.M."/>
            <person name="Brown J.L."/>
            <person name="Bruce D."/>
            <person name="Detter C."/>
            <person name="Munk C."/>
            <person name="Smith L.A."/>
            <person name="Smith T.J."/>
            <person name="Sutton G."/>
            <person name="Brettin T.S."/>
        </authorList>
    </citation>
    <scope>NUCLEOTIDE SEQUENCE [LARGE SCALE GENOMIC DNA]</scope>
    <source>
        <strain>Eklund 17B / Type B</strain>
    </source>
</reference>
<protein>
    <recommendedName>
        <fullName evidence="1">Ribonuclease P protein component</fullName>
        <shortName evidence="1">RNase P protein</shortName>
        <shortName evidence="1">RNaseP protein</shortName>
        <ecNumber evidence="1">3.1.26.5</ecNumber>
    </recommendedName>
    <alternativeName>
        <fullName evidence="1">Protein C5</fullName>
    </alternativeName>
</protein>